<keyword id="KW-0687">Ribonucleoprotein</keyword>
<keyword id="KW-0689">Ribosomal protein</keyword>
<organism>
    <name type="scientific">Pseudomonas putida (strain GB-1)</name>
    <dbReference type="NCBI Taxonomy" id="76869"/>
    <lineage>
        <taxon>Bacteria</taxon>
        <taxon>Pseudomonadati</taxon>
        <taxon>Pseudomonadota</taxon>
        <taxon>Gammaproteobacteria</taxon>
        <taxon>Pseudomonadales</taxon>
        <taxon>Pseudomonadaceae</taxon>
        <taxon>Pseudomonas</taxon>
    </lineage>
</organism>
<accession>B0KK75</accession>
<evidence type="ECO:0000255" key="1">
    <source>
        <dbReference type="HAMAP-Rule" id="MF_00374"/>
    </source>
</evidence>
<evidence type="ECO:0000305" key="2"/>
<protein>
    <recommendedName>
        <fullName evidence="1">Large ribosomal subunit protein uL29</fullName>
    </recommendedName>
    <alternativeName>
        <fullName evidence="2">50S ribosomal protein L29</fullName>
    </alternativeName>
</protein>
<gene>
    <name evidence="1" type="primary">rpmC</name>
    <name type="ordered locus">PputGB1_0492</name>
</gene>
<sequence length="64" mass="7303">MMKANELREKSAQQLNEQLLGLLRDQFNLRMQKATGQLGQSHLLSQVKRDIARVKTVLNQQAGK</sequence>
<comment type="similarity">
    <text evidence="1">Belongs to the universal ribosomal protein uL29 family.</text>
</comment>
<feature type="chain" id="PRO_1000079897" description="Large ribosomal subunit protein uL29">
    <location>
        <begin position="1"/>
        <end position="64"/>
    </location>
</feature>
<reference key="1">
    <citation type="submission" date="2008-01" db="EMBL/GenBank/DDBJ databases">
        <title>Complete sequence of Pseudomonas putida GB-1.</title>
        <authorList>
            <consortium name="US DOE Joint Genome Institute"/>
            <person name="Copeland A."/>
            <person name="Lucas S."/>
            <person name="Lapidus A."/>
            <person name="Barry K."/>
            <person name="Glavina del Rio T."/>
            <person name="Dalin E."/>
            <person name="Tice H."/>
            <person name="Pitluck S."/>
            <person name="Bruce D."/>
            <person name="Goodwin L."/>
            <person name="Chertkov O."/>
            <person name="Brettin T."/>
            <person name="Detter J.C."/>
            <person name="Han C."/>
            <person name="Kuske C.R."/>
            <person name="Schmutz J."/>
            <person name="Larimer F."/>
            <person name="Land M."/>
            <person name="Hauser L."/>
            <person name="Kyrpides N."/>
            <person name="Kim E."/>
            <person name="McCarthy J.K."/>
            <person name="Richardson P."/>
        </authorList>
    </citation>
    <scope>NUCLEOTIDE SEQUENCE [LARGE SCALE GENOMIC DNA]</scope>
    <source>
        <strain>GB-1</strain>
    </source>
</reference>
<name>RL29_PSEPG</name>
<proteinExistence type="inferred from homology"/>
<dbReference type="EMBL" id="CP000926">
    <property type="protein sequence ID" value="ABY96403.1"/>
    <property type="molecule type" value="Genomic_DNA"/>
</dbReference>
<dbReference type="SMR" id="B0KK75"/>
<dbReference type="KEGG" id="ppg:PputGB1_0492"/>
<dbReference type="eggNOG" id="COG0255">
    <property type="taxonomic scope" value="Bacteria"/>
</dbReference>
<dbReference type="HOGENOM" id="CLU_158491_1_2_6"/>
<dbReference type="Proteomes" id="UP000002157">
    <property type="component" value="Chromosome"/>
</dbReference>
<dbReference type="GO" id="GO:0022625">
    <property type="term" value="C:cytosolic large ribosomal subunit"/>
    <property type="evidence" value="ECO:0007669"/>
    <property type="project" value="TreeGrafter"/>
</dbReference>
<dbReference type="GO" id="GO:0003735">
    <property type="term" value="F:structural constituent of ribosome"/>
    <property type="evidence" value="ECO:0007669"/>
    <property type="project" value="InterPro"/>
</dbReference>
<dbReference type="GO" id="GO:0006412">
    <property type="term" value="P:translation"/>
    <property type="evidence" value="ECO:0007669"/>
    <property type="project" value="UniProtKB-UniRule"/>
</dbReference>
<dbReference type="CDD" id="cd00427">
    <property type="entry name" value="Ribosomal_L29_HIP"/>
    <property type="match status" value="1"/>
</dbReference>
<dbReference type="FunFam" id="1.10.287.310:FF:000001">
    <property type="entry name" value="50S ribosomal protein L29"/>
    <property type="match status" value="1"/>
</dbReference>
<dbReference type="Gene3D" id="1.10.287.310">
    <property type="match status" value="1"/>
</dbReference>
<dbReference type="HAMAP" id="MF_00374">
    <property type="entry name" value="Ribosomal_uL29"/>
    <property type="match status" value="1"/>
</dbReference>
<dbReference type="InterPro" id="IPR050063">
    <property type="entry name" value="Ribosomal_protein_uL29"/>
</dbReference>
<dbReference type="InterPro" id="IPR001854">
    <property type="entry name" value="Ribosomal_uL29"/>
</dbReference>
<dbReference type="InterPro" id="IPR018254">
    <property type="entry name" value="Ribosomal_uL29_CS"/>
</dbReference>
<dbReference type="InterPro" id="IPR036049">
    <property type="entry name" value="Ribosomal_uL29_sf"/>
</dbReference>
<dbReference type="NCBIfam" id="TIGR00012">
    <property type="entry name" value="L29"/>
    <property type="match status" value="1"/>
</dbReference>
<dbReference type="PANTHER" id="PTHR10916">
    <property type="entry name" value="60S RIBOSOMAL PROTEIN L35/50S RIBOSOMAL PROTEIN L29"/>
    <property type="match status" value="1"/>
</dbReference>
<dbReference type="PANTHER" id="PTHR10916:SF0">
    <property type="entry name" value="LARGE RIBOSOMAL SUBUNIT PROTEIN UL29C"/>
    <property type="match status" value="1"/>
</dbReference>
<dbReference type="Pfam" id="PF00831">
    <property type="entry name" value="Ribosomal_L29"/>
    <property type="match status" value="1"/>
</dbReference>
<dbReference type="SUPFAM" id="SSF46561">
    <property type="entry name" value="Ribosomal protein L29 (L29p)"/>
    <property type="match status" value="1"/>
</dbReference>
<dbReference type="PROSITE" id="PS00579">
    <property type="entry name" value="RIBOSOMAL_L29"/>
    <property type="match status" value="1"/>
</dbReference>